<organism>
    <name type="scientific">Pseudoalteromonas translucida (strain TAC 125)</name>
    <dbReference type="NCBI Taxonomy" id="326442"/>
    <lineage>
        <taxon>Bacteria</taxon>
        <taxon>Pseudomonadati</taxon>
        <taxon>Pseudomonadota</taxon>
        <taxon>Gammaproteobacteria</taxon>
        <taxon>Alteromonadales</taxon>
        <taxon>Pseudoalteromonadaceae</taxon>
        <taxon>Pseudoalteromonas</taxon>
    </lineage>
</organism>
<accession>Q3IGU4</accession>
<keyword id="KW-0030">Aminoacyl-tRNA synthetase</keyword>
<keyword id="KW-0067">ATP-binding</keyword>
<keyword id="KW-0963">Cytoplasm</keyword>
<keyword id="KW-0436">Ligase</keyword>
<keyword id="KW-0547">Nucleotide-binding</keyword>
<keyword id="KW-0648">Protein biosynthesis</keyword>
<keyword id="KW-1185">Reference proteome</keyword>
<gene>
    <name evidence="1" type="primary">asnS</name>
    <name type="ordered locus">PSHAa1616</name>
</gene>
<proteinExistence type="inferred from homology"/>
<evidence type="ECO:0000255" key="1">
    <source>
        <dbReference type="HAMAP-Rule" id="MF_00534"/>
    </source>
</evidence>
<name>SYN_PSET1</name>
<dbReference type="EC" id="6.1.1.22" evidence="1"/>
<dbReference type="EMBL" id="CR954246">
    <property type="protein sequence ID" value="CAI86689.1"/>
    <property type="molecule type" value="Genomic_DNA"/>
</dbReference>
<dbReference type="SMR" id="Q3IGU4"/>
<dbReference type="STRING" id="326442.PSHAa1616"/>
<dbReference type="KEGG" id="pha:PSHAa1616"/>
<dbReference type="eggNOG" id="COG0017">
    <property type="taxonomic scope" value="Bacteria"/>
</dbReference>
<dbReference type="HOGENOM" id="CLU_004553_2_0_6"/>
<dbReference type="BioCyc" id="PHAL326442:PSHA_RS07925-MONOMER"/>
<dbReference type="Proteomes" id="UP000006843">
    <property type="component" value="Chromosome I"/>
</dbReference>
<dbReference type="GO" id="GO:0005737">
    <property type="term" value="C:cytoplasm"/>
    <property type="evidence" value="ECO:0007669"/>
    <property type="project" value="UniProtKB-SubCell"/>
</dbReference>
<dbReference type="GO" id="GO:0004816">
    <property type="term" value="F:asparagine-tRNA ligase activity"/>
    <property type="evidence" value="ECO:0007669"/>
    <property type="project" value="UniProtKB-UniRule"/>
</dbReference>
<dbReference type="GO" id="GO:0005524">
    <property type="term" value="F:ATP binding"/>
    <property type="evidence" value="ECO:0007669"/>
    <property type="project" value="UniProtKB-UniRule"/>
</dbReference>
<dbReference type="GO" id="GO:0003676">
    <property type="term" value="F:nucleic acid binding"/>
    <property type="evidence" value="ECO:0007669"/>
    <property type="project" value="InterPro"/>
</dbReference>
<dbReference type="GO" id="GO:0006421">
    <property type="term" value="P:asparaginyl-tRNA aminoacylation"/>
    <property type="evidence" value="ECO:0007669"/>
    <property type="project" value="UniProtKB-UniRule"/>
</dbReference>
<dbReference type="CDD" id="cd00776">
    <property type="entry name" value="AsxRS_core"/>
    <property type="match status" value="1"/>
</dbReference>
<dbReference type="CDD" id="cd04318">
    <property type="entry name" value="EcAsnRS_like_N"/>
    <property type="match status" value="1"/>
</dbReference>
<dbReference type="FunFam" id="3.30.930.10:FF:000016">
    <property type="entry name" value="Asparagine--tRNA ligase"/>
    <property type="match status" value="1"/>
</dbReference>
<dbReference type="Gene3D" id="3.30.930.10">
    <property type="entry name" value="Bira Bifunctional Protein, Domain 2"/>
    <property type="match status" value="1"/>
</dbReference>
<dbReference type="Gene3D" id="2.40.50.140">
    <property type="entry name" value="Nucleic acid-binding proteins"/>
    <property type="match status" value="1"/>
</dbReference>
<dbReference type="HAMAP" id="MF_00534">
    <property type="entry name" value="Asn_tRNA_synth"/>
    <property type="match status" value="1"/>
</dbReference>
<dbReference type="InterPro" id="IPR004364">
    <property type="entry name" value="Aa-tRNA-synt_II"/>
</dbReference>
<dbReference type="InterPro" id="IPR006195">
    <property type="entry name" value="aa-tRNA-synth_II"/>
</dbReference>
<dbReference type="InterPro" id="IPR045864">
    <property type="entry name" value="aa-tRNA-synth_II/BPL/LPL"/>
</dbReference>
<dbReference type="InterPro" id="IPR004522">
    <property type="entry name" value="Asn-tRNA-ligase"/>
</dbReference>
<dbReference type="InterPro" id="IPR002312">
    <property type="entry name" value="Asp/Asn-tRNA-synth_IIb"/>
</dbReference>
<dbReference type="InterPro" id="IPR012340">
    <property type="entry name" value="NA-bd_OB-fold"/>
</dbReference>
<dbReference type="InterPro" id="IPR004365">
    <property type="entry name" value="NA-bd_OB_tRNA"/>
</dbReference>
<dbReference type="NCBIfam" id="TIGR00457">
    <property type="entry name" value="asnS"/>
    <property type="match status" value="1"/>
</dbReference>
<dbReference type="NCBIfam" id="NF003037">
    <property type="entry name" value="PRK03932.1"/>
    <property type="match status" value="1"/>
</dbReference>
<dbReference type="PANTHER" id="PTHR22594:SF34">
    <property type="entry name" value="ASPARAGINE--TRNA LIGASE, MITOCHONDRIAL-RELATED"/>
    <property type="match status" value="1"/>
</dbReference>
<dbReference type="PANTHER" id="PTHR22594">
    <property type="entry name" value="ASPARTYL/LYSYL-TRNA SYNTHETASE"/>
    <property type="match status" value="1"/>
</dbReference>
<dbReference type="Pfam" id="PF00152">
    <property type="entry name" value="tRNA-synt_2"/>
    <property type="match status" value="1"/>
</dbReference>
<dbReference type="Pfam" id="PF01336">
    <property type="entry name" value="tRNA_anti-codon"/>
    <property type="match status" value="1"/>
</dbReference>
<dbReference type="PRINTS" id="PR01042">
    <property type="entry name" value="TRNASYNTHASP"/>
</dbReference>
<dbReference type="SUPFAM" id="SSF55681">
    <property type="entry name" value="Class II aaRS and biotin synthetases"/>
    <property type="match status" value="1"/>
</dbReference>
<dbReference type="SUPFAM" id="SSF50249">
    <property type="entry name" value="Nucleic acid-binding proteins"/>
    <property type="match status" value="1"/>
</dbReference>
<dbReference type="PROSITE" id="PS50862">
    <property type="entry name" value="AA_TRNA_LIGASE_II"/>
    <property type="match status" value="1"/>
</dbReference>
<reference key="1">
    <citation type="journal article" date="2005" name="Genome Res.">
        <title>Coping with cold: the genome of the versatile marine Antarctica bacterium Pseudoalteromonas haloplanktis TAC125.</title>
        <authorList>
            <person name="Medigue C."/>
            <person name="Krin E."/>
            <person name="Pascal G."/>
            <person name="Barbe V."/>
            <person name="Bernsel A."/>
            <person name="Bertin P.N."/>
            <person name="Cheung F."/>
            <person name="Cruveiller S."/>
            <person name="D'Amico S."/>
            <person name="Duilio A."/>
            <person name="Fang G."/>
            <person name="Feller G."/>
            <person name="Ho C."/>
            <person name="Mangenot S."/>
            <person name="Marino G."/>
            <person name="Nilsson J."/>
            <person name="Parrilli E."/>
            <person name="Rocha E.P.C."/>
            <person name="Rouy Z."/>
            <person name="Sekowska A."/>
            <person name="Tutino M.L."/>
            <person name="Vallenet D."/>
            <person name="von Heijne G."/>
            <person name="Danchin A."/>
        </authorList>
    </citation>
    <scope>NUCLEOTIDE SEQUENCE [LARGE SCALE GENOMIC DNA]</scope>
    <source>
        <strain>TAC 125</strain>
    </source>
</reference>
<comment type="catalytic activity">
    <reaction evidence="1">
        <text>tRNA(Asn) + L-asparagine + ATP = L-asparaginyl-tRNA(Asn) + AMP + diphosphate + H(+)</text>
        <dbReference type="Rhea" id="RHEA:11180"/>
        <dbReference type="Rhea" id="RHEA-COMP:9659"/>
        <dbReference type="Rhea" id="RHEA-COMP:9674"/>
        <dbReference type="ChEBI" id="CHEBI:15378"/>
        <dbReference type="ChEBI" id="CHEBI:30616"/>
        <dbReference type="ChEBI" id="CHEBI:33019"/>
        <dbReference type="ChEBI" id="CHEBI:58048"/>
        <dbReference type="ChEBI" id="CHEBI:78442"/>
        <dbReference type="ChEBI" id="CHEBI:78515"/>
        <dbReference type="ChEBI" id="CHEBI:456215"/>
        <dbReference type="EC" id="6.1.1.22"/>
    </reaction>
</comment>
<comment type="subunit">
    <text evidence="1">Homodimer.</text>
</comment>
<comment type="subcellular location">
    <subcellularLocation>
        <location evidence="1">Cytoplasm</location>
    </subcellularLocation>
</comment>
<comment type="similarity">
    <text evidence="1">Belongs to the class-II aminoacyl-tRNA synthetase family.</text>
</comment>
<feature type="chain" id="PRO_1000051415" description="Asparagine--tRNA ligase">
    <location>
        <begin position="1"/>
        <end position="465"/>
    </location>
</feature>
<protein>
    <recommendedName>
        <fullName evidence="1">Asparagine--tRNA ligase</fullName>
        <ecNumber evidence="1">6.1.1.22</ecNumber>
    </recommendedName>
    <alternativeName>
        <fullName evidence="1">Asparaginyl-tRNA synthetase</fullName>
        <shortName evidence="1">AsnRS</shortName>
    </alternativeName>
</protein>
<sequence>MSHLAISELLKGKVSVDSQVTVKGWIRTRRDSKAGISFLAVHDGSCFDPIQAVVPNSLNNYDEVTSLTAGCSVSVTGVLVQSAGQGQSYEIQANSVTVLGWVENPDSYPMAAKRHSIEYLREHAHLRPRTNMIGAVTRVRNCLAQAIHRFYHEQGFLWISTPIITASDCEGAGEMFRVSTLDMQNLPLTDKGEVDYSEDFFGKEAFLTVSGQLNGETYASAMSKIYTFGPTFRAENSNTSRHLAEFWMVEPELAFADLEDIAKLAEQMLKYVFKAVLEERRDDMEFFAQRVEKTAITRLEEFVEKDFAQVDYTEAVEILKACGKKFEYAVEWGVDLQSEHERYLAEEHFKAPVVIKNYPRDIKAFYMRQNEDGKTVAAMDIVAPGIGEIIGGSQREERLDILDARLDEMGLNKDDYSWYRDLRKYGTVPHSGFGLGFERLVAYVTGMGNVRDVIAFPRTKGSATY</sequence>